<organism>
    <name type="scientific">Buchnera aphidicola subsp. Acyrthosiphon pisum (strain APS)</name>
    <name type="common">Acyrthosiphon pisum symbiotic bacterium</name>
    <dbReference type="NCBI Taxonomy" id="107806"/>
    <lineage>
        <taxon>Bacteria</taxon>
        <taxon>Pseudomonadati</taxon>
        <taxon>Pseudomonadota</taxon>
        <taxon>Gammaproteobacteria</taxon>
        <taxon>Enterobacterales</taxon>
        <taxon>Erwiniaceae</taxon>
        <taxon>Buchnera</taxon>
    </lineage>
</organism>
<name>RS10_BUCAI</name>
<protein>
    <recommendedName>
        <fullName evidence="1">Small ribosomal subunit protein uS10</fullName>
    </recommendedName>
    <alternativeName>
        <fullName evidence="2">30S ribosomal protein S10</fullName>
    </alternativeName>
</protein>
<feature type="chain" id="PRO_0000146509" description="Small ribosomal subunit protein uS10">
    <location>
        <begin position="1"/>
        <end position="103"/>
    </location>
</feature>
<keyword id="KW-1185">Reference proteome</keyword>
<keyword id="KW-0687">Ribonucleoprotein</keyword>
<keyword id="KW-0689">Ribosomal protein</keyword>
<dbReference type="EMBL" id="BA000003">
    <property type="protein sequence ID" value="BAB13218.1"/>
    <property type="molecule type" value="Genomic_DNA"/>
</dbReference>
<dbReference type="RefSeq" id="NP_240332.1">
    <property type="nucleotide sequence ID" value="NC_002528.1"/>
</dbReference>
<dbReference type="RefSeq" id="WP_009874476.1">
    <property type="nucleotide sequence ID" value="NZ_AP036055.1"/>
</dbReference>
<dbReference type="SMR" id="P57592"/>
<dbReference type="STRING" id="563178.BUAP5A_518"/>
<dbReference type="EnsemblBacteria" id="BAB13218">
    <property type="protein sequence ID" value="BAB13218"/>
    <property type="gene ID" value="BAB13218"/>
</dbReference>
<dbReference type="KEGG" id="buc:BU525"/>
<dbReference type="PATRIC" id="fig|107806.10.peg.530"/>
<dbReference type="eggNOG" id="COG0051">
    <property type="taxonomic scope" value="Bacteria"/>
</dbReference>
<dbReference type="HOGENOM" id="CLU_122625_1_3_6"/>
<dbReference type="Proteomes" id="UP000001806">
    <property type="component" value="Chromosome"/>
</dbReference>
<dbReference type="GO" id="GO:1990904">
    <property type="term" value="C:ribonucleoprotein complex"/>
    <property type="evidence" value="ECO:0007669"/>
    <property type="project" value="UniProtKB-KW"/>
</dbReference>
<dbReference type="GO" id="GO:0005840">
    <property type="term" value="C:ribosome"/>
    <property type="evidence" value="ECO:0007669"/>
    <property type="project" value="UniProtKB-KW"/>
</dbReference>
<dbReference type="GO" id="GO:0003735">
    <property type="term" value="F:structural constituent of ribosome"/>
    <property type="evidence" value="ECO:0007669"/>
    <property type="project" value="InterPro"/>
</dbReference>
<dbReference type="GO" id="GO:0000049">
    <property type="term" value="F:tRNA binding"/>
    <property type="evidence" value="ECO:0007669"/>
    <property type="project" value="UniProtKB-UniRule"/>
</dbReference>
<dbReference type="GO" id="GO:0006412">
    <property type="term" value="P:translation"/>
    <property type="evidence" value="ECO:0007669"/>
    <property type="project" value="UniProtKB-UniRule"/>
</dbReference>
<dbReference type="FunFam" id="3.30.70.600:FF:000001">
    <property type="entry name" value="30S ribosomal protein S10"/>
    <property type="match status" value="1"/>
</dbReference>
<dbReference type="Gene3D" id="3.30.70.600">
    <property type="entry name" value="Ribosomal protein S10 domain"/>
    <property type="match status" value="1"/>
</dbReference>
<dbReference type="HAMAP" id="MF_00508">
    <property type="entry name" value="Ribosomal_uS10"/>
    <property type="match status" value="1"/>
</dbReference>
<dbReference type="InterPro" id="IPR001848">
    <property type="entry name" value="Ribosomal_uS10"/>
</dbReference>
<dbReference type="InterPro" id="IPR018268">
    <property type="entry name" value="Ribosomal_uS10_CS"/>
</dbReference>
<dbReference type="InterPro" id="IPR027486">
    <property type="entry name" value="Ribosomal_uS10_dom"/>
</dbReference>
<dbReference type="InterPro" id="IPR036838">
    <property type="entry name" value="Ribosomal_uS10_dom_sf"/>
</dbReference>
<dbReference type="NCBIfam" id="NF001861">
    <property type="entry name" value="PRK00596.1"/>
    <property type="match status" value="1"/>
</dbReference>
<dbReference type="NCBIfam" id="TIGR01049">
    <property type="entry name" value="rpsJ_bact"/>
    <property type="match status" value="1"/>
</dbReference>
<dbReference type="PANTHER" id="PTHR11700">
    <property type="entry name" value="30S RIBOSOMAL PROTEIN S10 FAMILY MEMBER"/>
    <property type="match status" value="1"/>
</dbReference>
<dbReference type="Pfam" id="PF00338">
    <property type="entry name" value="Ribosomal_S10"/>
    <property type="match status" value="1"/>
</dbReference>
<dbReference type="PRINTS" id="PR00971">
    <property type="entry name" value="RIBOSOMALS10"/>
</dbReference>
<dbReference type="SMART" id="SM01403">
    <property type="entry name" value="Ribosomal_S10"/>
    <property type="match status" value="1"/>
</dbReference>
<dbReference type="SUPFAM" id="SSF54999">
    <property type="entry name" value="Ribosomal protein S10"/>
    <property type="match status" value="1"/>
</dbReference>
<dbReference type="PROSITE" id="PS00361">
    <property type="entry name" value="RIBOSOMAL_S10"/>
    <property type="match status" value="1"/>
</dbReference>
<sequence>MQNQRIRIRLKAFDHRLIDQSTTEIVETAKRTGAQVRGPIPLPTRKERFTILVSPHVNKDARDQYEIRTHKRLIDIVEPTEKTVDALMRLDLAAGVDVQISLG</sequence>
<proteinExistence type="inferred from homology"/>
<evidence type="ECO:0000255" key="1">
    <source>
        <dbReference type="HAMAP-Rule" id="MF_00508"/>
    </source>
</evidence>
<evidence type="ECO:0000305" key="2"/>
<comment type="function">
    <text evidence="1">Involved in the binding of tRNA to the ribosomes.</text>
</comment>
<comment type="subunit">
    <text evidence="1">Part of the 30S ribosomal subunit.</text>
</comment>
<comment type="similarity">
    <text evidence="1">Belongs to the universal ribosomal protein uS10 family.</text>
</comment>
<reference key="1">
    <citation type="journal article" date="2000" name="Nature">
        <title>Genome sequence of the endocellular bacterial symbiont of aphids Buchnera sp. APS.</title>
        <authorList>
            <person name="Shigenobu S."/>
            <person name="Watanabe H."/>
            <person name="Hattori M."/>
            <person name="Sakaki Y."/>
            <person name="Ishikawa H."/>
        </authorList>
    </citation>
    <scope>NUCLEOTIDE SEQUENCE [LARGE SCALE GENOMIC DNA]</scope>
    <source>
        <strain>APS</strain>
    </source>
</reference>
<accession>P57592</accession>
<gene>
    <name evidence="1" type="primary">rpsJ</name>
    <name type="ordered locus">BU525</name>
</gene>